<comment type="function">
    <text evidence="1">Modulates transcription in response to changes in cellular NADH/NAD(+) redox state.</text>
</comment>
<comment type="subunit">
    <text evidence="1">Homodimer.</text>
</comment>
<comment type="subcellular location">
    <subcellularLocation>
        <location evidence="1">Cytoplasm</location>
    </subcellularLocation>
</comment>
<comment type="similarity">
    <text evidence="1">Belongs to the transcriptional regulatory Rex family.</text>
</comment>
<organism>
    <name type="scientific">Streptococcus equi subsp. zooepidemicus (strain H70)</name>
    <dbReference type="NCBI Taxonomy" id="553483"/>
    <lineage>
        <taxon>Bacteria</taxon>
        <taxon>Bacillati</taxon>
        <taxon>Bacillota</taxon>
        <taxon>Bacilli</taxon>
        <taxon>Lactobacillales</taxon>
        <taxon>Streptococcaceae</taxon>
        <taxon>Streptococcus</taxon>
    </lineage>
</organism>
<accession>C0MEY9</accession>
<reference key="1">
    <citation type="journal article" date="2009" name="PLoS Pathog.">
        <title>Genomic evidence for the evolution of Streptococcus equi: host restriction, increased virulence, and genetic exchange with human pathogens.</title>
        <authorList>
            <person name="Holden M.T.G."/>
            <person name="Heather Z."/>
            <person name="Paillot R."/>
            <person name="Steward K.F."/>
            <person name="Webb K."/>
            <person name="Ainslie F."/>
            <person name="Jourdan T."/>
            <person name="Bason N.C."/>
            <person name="Holroyd N.E."/>
            <person name="Mungall K."/>
            <person name="Quail M.A."/>
            <person name="Sanders M."/>
            <person name="Simmonds M."/>
            <person name="Willey D."/>
            <person name="Brooks K."/>
            <person name="Aanensen D.M."/>
            <person name="Spratt B.G."/>
            <person name="Jolley K.A."/>
            <person name="Maiden M.C.J."/>
            <person name="Kehoe M."/>
            <person name="Chanter N."/>
            <person name="Bentley S.D."/>
            <person name="Robinson C."/>
            <person name="Maskell D.J."/>
            <person name="Parkhill J."/>
            <person name="Waller A.S."/>
        </authorList>
    </citation>
    <scope>NUCLEOTIDE SEQUENCE [LARGE SCALE GENOMIC DNA]</scope>
    <source>
        <strain>H70</strain>
    </source>
</reference>
<protein>
    <recommendedName>
        <fullName evidence="1">Redox-sensing transcriptional repressor Rex</fullName>
    </recommendedName>
</protein>
<gene>
    <name evidence="1" type="primary">rex</name>
    <name type="ordered locus">SZO_09160</name>
</gene>
<evidence type="ECO:0000255" key="1">
    <source>
        <dbReference type="HAMAP-Rule" id="MF_01131"/>
    </source>
</evidence>
<keyword id="KW-0963">Cytoplasm</keyword>
<keyword id="KW-0238">DNA-binding</keyword>
<keyword id="KW-0520">NAD</keyword>
<keyword id="KW-0678">Repressor</keyword>
<keyword id="KW-0804">Transcription</keyword>
<keyword id="KW-0805">Transcription regulation</keyword>
<sequence length="214" mass="24035">MVIDKSIPKATAKRLSLYYRIFKRFYADQVEKASSKQIADAMGIDSATVRRDFSYFGELGRRGFGYDVTKLMNFFADLLNDHSTTHVILVGCGNIGRALLHYRFHDRNKMQIVMGFDTDDNPMVGTKTPDDIPIYGISTIKEHLDNSGIETAILTVPSIYAQEVADQLIEAGIRGILSFAPLHLQVPKGVIVQSVDLTSELQTLLYFMNQNHLD</sequence>
<dbReference type="EMBL" id="FM204884">
    <property type="protein sequence ID" value="CAW99166.1"/>
    <property type="molecule type" value="Genomic_DNA"/>
</dbReference>
<dbReference type="SMR" id="C0MEY9"/>
<dbReference type="KEGG" id="seq:SZO_09160"/>
<dbReference type="eggNOG" id="COG2344">
    <property type="taxonomic scope" value="Bacteria"/>
</dbReference>
<dbReference type="HOGENOM" id="CLU_061534_1_1_9"/>
<dbReference type="Proteomes" id="UP000001368">
    <property type="component" value="Chromosome"/>
</dbReference>
<dbReference type="GO" id="GO:0005737">
    <property type="term" value="C:cytoplasm"/>
    <property type="evidence" value="ECO:0007669"/>
    <property type="project" value="UniProtKB-SubCell"/>
</dbReference>
<dbReference type="GO" id="GO:0003677">
    <property type="term" value="F:DNA binding"/>
    <property type="evidence" value="ECO:0007669"/>
    <property type="project" value="UniProtKB-UniRule"/>
</dbReference>
<dbReference type="GO" id="GO:0003700">
    <property type="term" value="F:DNA-binding transcription factor activity"/>
    <property type="evidence" value="ECO:0007669"/>
    <property type="project" value="UniProtKB-UniRule"/>
</dbReference>
<dbReference type="GO" id="GO:0045892">
    <property type="term" value="P:negative regulation of DNA-templated transcription"/>
    <property type="evidence" value="ECO:0007669"/>
    <property type="project" value="InterPro"/>
</dbReference>
<dbReference type="GO" id="GO:0051775">
    <property type="term" value="P:response to redox state"/>
    <property type="evidence" value="ECO:0007669"/>
    <property type="project" value="InterPro"/>
</dbReference>
<dbReference type="Gene3D" id="3.40.50.720">
    <property type="entry name" value="NAD(P)-binding Rossmann-like Domain"/>
    <property type="match status" value="1"/>
</dbReference>
<dbReference type="Gene3D" id="1.10.10.10">
    <property type="entry name" value="Winged helix-like DNA-binding domain superfamily/Winged helix DNA-binding domain"/>
    <property type="match status" value="1"/>
</dbReference>
<dbReference type="HAMAP" id="MF_01131">
    <property type="entry name" value="Rex"/>
    <property type="match status" value="1"/>
</dbReference>
<dbReference type="InterPro" id="IPR003781">
    <property type="entry name" value="CoA-bd"/>
</dbReference>
<dbReference type="InterPro" id="IPR036291">
    <property type="entry name" value="NAD(P)-bd_dom_sf"/>
</dbReference>
<dbReference type="InterPro" id="IPR009718">
    <property type="entry name" value="Rex_DNA-bd_C_dom"/>
</dbReference>
<dbReference type="InterPro" id="IPR022876">
    <property type="entry name" value="Tscrpt_rep_Rex"/>
</dbReference>
<dbReference type="InterPro" id="IPR036388">
    <property type="entry name" value="WH-like_DNA-bd_sf"/>
</dbReference>
<dbReference type="InterPro" id="IPR036390">
    <property type="entry name" value="WH_DNA-bd_sf"/>
</dbReference>
<dbReference type="NCBIfam" id="NF003988">
    <property type="entry name" value="PRK05472.1-1"/>
    <property type="match status" value="1"/>
</dbReference>
<dbReference type="NCBIfam" id="NF003989">
    <property type="entry name" value="PRK05472.1-3"/>
    <property type="match status" value="1"/>
</dbReference>
<dbReference type="NCBIfam" id="NF003991">
    <property type="entry name" value="PRK05472.1-5"/>
    <property type="match status" value="1"/>
</dbReference>
<dbReference type="NCBIfam" id="NF003994">
    <property type="entry name" value="PRK05472.2-3"/>
    <property type="match status" value="1"/>
</dbReference>
<dbReference type="NCBIfam" id="NF003995">
    <property type="entry name" value="PRK05472.2-4"/>
    <property type="match status" value="1"/>
</dbReference>
<dbReference type="NCBIfam" id="NF003996">
    <property type="entry name" value="PRK05472.2-5"/>
    <property type="match status" value="1"/>
</dbReference>
<dbReference type="PANTHER" id="PTHR35786">
    <property type="entry name" value="REDOX-SENSING TRANSCRIPTIONAL REPRESSOR REX"/>
    <property type="match status" value="1"/>
</dbReference>
<dbReference type="PANTHER" id="PTHR35786:SF1">
    <property type="entry name" value="REDOX-SENSING TRANSCRIPTIONAL REPRESSOR REX 1"/>
    <property type="match status" value="1"/>
</dbReference>
<dbReference type="Pfam" id="PF02629">
    <property type="entry name" value="CoA_binding"/>
    <property type="match status" value="1"/>
</dbReference>
<dbReference type="Pfam" id="PF06971">
    <property type="entry name" value="Put_DNA-bind_N"/>
    <property type="match status" value="1"/>
</dbReference>
<dbReference type="SMART" id="SM00881">
    <property type="entry name" value="CoA_binding"/>
    <property type="match status" value="1"/>
</dbReference>
<dbReference type="SUPFAM" id="SSF51735">
    <property type="entry name" value="NAD(P)-binding Rossmann-fold domains"/>
    <property type="match status" value="1"/>
</dbReference>
<dbReference type="SUPFAM" id="SSF46785">
    <property type="entry name" value="Winged helix' DNA-binding domain"/>
    <property type="match status" value="1"/>
</dbReference>
<feature type="chain" id="PRO_1000213642" description="Redox-sensing transcriptional repressor Rex">
    <location>
        <begin position="1"/>
        <end position="214"/>
    </location>
</feature>
<feature type="DNA-binding region" description="H-T-H motif" evidence="1">
    <location>
        <begin position="17"/>
        <end position="56"/>
    </location>
</feature>
<feature type="binding site" evidence="1">
    <location>
        <begin position="91"/>
        <end position="96"/>
    </location>
    <ligand>
        <name>NAD(+)</name>
        <dbReference type="ChEBI" id="CHEBI:57540"/>
    </ligand>
</feature>
<proteinExistence type="inferred from homology"/>
<name>REX_STRS7</name>